<keyword id="KW-1015">Disulfide bond</keyword>
<keyword id="KW-0479">Metal-binding</keyword>
<keyword id="KW-0481">Metalloenzyme inhibitor</keyword>
<keyword id="KW-0483">Metalloprotease inhibitor</keyword>
<keyword id="KW-0646">Protease inhibitor</keyword>
<keyword id="KW-1185">Reference proteome</keyword>
<keyword id="KW-0964">Secreted</keyword>
<keyword id="KW-0732">Signal</keyword>
<keyword id="KW-0862">Zinc</keyword>
<accession>O42146</accession>
<reference key="1">
    <citation type="journal article" date="1998" name="J. Cell. Physiol.">
        <title>Cloning, expression, and characterization of chicken tissue inhibitor of metalloproteinase-2 (TIMP-2) in normal and transformed chicken embryo fibroblasts.</title>
        <authorList>
            <person name="Aimes R.T."/>
            <person name="Li L.H."/>
            <person name="Weaver B."/>
            <person name="Hawkes S."/>
            <person name="Hahn-Dantona E.A."/>
            <person name="Quigley J.P."/>
        </authorList>
    </citation>
    <scope>NUCLEOTIDE SEQUENCE [MRNA]</scope>
</reference>
<feature type="signal peptide" evidence="3">
    <location>
        <begin position="1"/>
        <end position="26"/>
    </location>
</feature>
<feature type="chain" id="PRO_0000034338" description="Metalloproteinase inhibitor 2">
    <location>
        <begin position="27"/>
        <end position="220"/>
    </location>
</feature>
<feature type="domain" description="NTR" evidence="4">
    <location>
        <begin position="27"/>
        <end position="152"/>
    </location>
</feature>
<feature type="region of interest" description="Involved in metalloproteinase-binding" evidence="2">
    <location>
        <begin position="27"/>
        <end position="30"/>
    </location>
</feature>
<feature type="region of interest" description="Involved in metalloproteinase-binding" evidence="2">
    <location>
        <begin position="95"/>
        <end position="96"/>
    </location>
</feature>
<feature type="binding site" evidence="2">
    <location>
        <position position="27"/>
    </location>
    <ligand>
        <name>Zn(2+)</name>
        <dbReference type="ChEBI" id="CHEBI:29105"/>
        <note>ligand shared with metalloproteinase partner</note>
    </ligand>
</feature>
<feature type="site" description="Involved in metalloproteinase-binding" evidence="2">
    <location>
        <position position="40"/>
    </location>
</feature>
<feature type="site" description="Involved in metalloproteinase-binding" evidence="2">
    <location>
        <position position="61"/>
    </location>
</feature>
<feature type="site" description="Involved in metalloproteinase-binding" evidence="2">
    <location>
        <position position="67"/>
    </location>
</feature>
<feature type="disulfide bond" evidence="4">
    <location>
        <begin position="27"/>
        <end position="98"/>
    </location>
</feature>
<feature type="disulfide bond" evidence="4">
    <location>
        <begin position="29"/>
        <end position="127"/>
    </location>
</feature>
<feature type="disulfide bond" evidence="4">
    <location>
        <begin position="39"/>
        <end position="152"/>
    </location>
</feature>
<feature type="disulfide bond" evidence="4">
    <location>
        <begin position="154"/>
        <end position="201"/>
    </location>
</feature>
<feature type="disulfide bond" evidence="4">
    <location>
        <begin position="159"/>
        <end position="164"/>
    </location>
</feature>
<feature type="disulfide bond" evidence="4">
    <location>
        <begin position="172"/>
        <end position="193"/>
    </location>
</feature>
<proteinExistence type="evidence at transcript level"/>
<organism>
    <name type="scientific">Gallus gallus</name>
    <name type="common">Chicken</name>
    <dbReference type="NCBI Taxonomy" id="9031"/>
    <lineage>
        <taxon>Eukaryota</taxon>
        <taxon>Metazoa</taxon>
        <taxon>Chordata</taxon>
        <taxon>Craniata</taxon>
        <taxon>Vertebrata</taxon>
        <taxon>Euteleostomi</taxon>
        <taxon>Archelosauria</taxon>
        <taxon>Archosauria</taxon>
        <taxon>Dinosauria</taxon>
        <taxon>Saurischia</taxon>
        <taxon>Theropoda</taxon>
        <taxon>Coelurosauria</taxon>
        <taxon>Aves</taxon>
        <taxon>Neognathae</taxon>
        <taxon>Galloanserae</taxon>
        <taxon>Galliformes</taxon>
        <taxon>Phasianidae</taxon>
        <taxon>Phasianinae</taxon>
        <taxon>Gallus</taxon>
    </lineage>
</organism>
<gene>
    <name type="primary">TIMP2</name>
</gene>
<sequence length="220" mass="24313">MPGAALPSLLAWLAVLLLGRARPADACSCSPIHPQQAFCNADVVIRAKRVSAKEVDSGNDIYGNPIKRIQYEVKQIKMFKGPDQDIEFIYTAPSTEVCGQPLDTGGKKEYLIAGKSEGDGKMHITLCDLVATWDSVSPTQKKSLNQRYQMGCECKISRCLSIPCFVSSSDECLWTDWAMEKIVGGRQAKHYACIKRSDGSCAWYRGMAPPKQEFLDIEDP</sequence>
<name>TIMP2_CHICK</name>
<comment type="function">
    <text evidence="1">Complexes with metalloproteinases (such as collagenases) and irreversibly inactivates them by binding to their catalytic zinc cofactor.</text>
</comment>
<comment type="subcellular location">
    <subcellularLocation>
        <location>Secreted</location>
    </subcellularLocation>
</comment>
<comment type="PTM">
    <text>The activity of TIMP2 is dependent on the presence of disulfide bonds.</text>
</comment>
<comment type="similarity">
    <text evidence="5">Belongs to the protease inhibitor I35 (TIMP) family.</text>
</comment>
<dbReference type="EMBL" id="AF004664">
    <property type="protein sequence ID" value="AAB69168.1"/>
    <property type="molecule type" value="mRNA"/>
</dbReference>
<dbReference type="RefSeq" id="NP_989629.1">
    <property type="nucleotide sequence ID" value="NM_204298.1"/>
</dbReference>
<dbReference type="SMR" id="O42146"/>
<dbReference type="FunCoup" id="O42146">
    <property type="interactions" value="189"/>
</dbReference>
<dbReference type="STRING" id="9031.ENSGALP00000041954"/>
<dbReference type="MEROPS" id="I35.002"/>
<dbReference type="PaxDb" id="9031-ENSGALP00000041954"/>
<dbReference type="GeneID" id="374178"/>
<dbReference type="KEGG" id="gga:374178"/>
<dbReference type="CTD" id="7077"/>
<dbReference type="VEuPathDB" id="HostDB:geneid_374178"/>
<dbReference type="eggNOG" id="KOG4745">
    <property type="taxonomic scope" value="Eukaryota"/>
</dbReference>
<dbReference type="InParanoid" id="O42146"/>
<dbReference type="OrthoDB" id="6041373at2759"/>
<dbReference type="PhylomeDB" id="O42146"/>
<dbReference type="PRO" id="PR:O42146"/>
<dbReference type="Proteomes" id="UP000000539">
    <property type="component" value="Unassembled WGS sequence"/>
</dbReference>
<dbReference type="GO" id="GO:0031012">
    <property type="term" value="C:extracellular matrix"/>
    <property type="evidence" value="ECO:0000318"/>
    <property type="project" value="GO_Central"/>
</dbReference>
<dbReference type="GO" id="GO:0005615">
    <property type="term" value="C:extracellular space"/>
    <property type="evidence" value="ECO:0000318"/>
    <property type="project" value="GO_Central"/>
</dbReference>
<dbReference type="GO" id="GO:0046872">
    <property type="term" value="F:metal ion binding"/>
    <property type="evidence" value="ECO:0007669"/>
    <property type="project" value="UniProtKB-KW"/>
</dbReference>
<dbReference type="GO" id="GO:0008191">
    <property type="term" value="F:metalloendopeptidase inhibitor activity"/>
    <property type="evidence" value="ECO:0000318"/>
    <property type="project" value="GO_Central"/>
</dbReference>
<dbReference type="GO" id="GO:0051045">
    <property type="term" value="P:negative regulation of membrane protein ectodomain proteolysis"/>
    <property type="evidence" value="ECO:0000318"/>
    <property type="project" value="GO_Central"/>
</dbReference>
<dbReference type="GO" id="GO:0034097">
    <property type="term" value="P:response to cytokine"/>
    <property type="evidence" value="ECO:0000318"/>
    <property type="project" value="GO_Central"/>
</dbReference>
<dbReference type="GO" id="GO:0009725">
    <property type="term" value="P:response to hormone"/>
    <property type="evidence" value="ECO:0000318"/>
    <property type="project" value="GO_Central"/>
</dbReference>
<dbReference type="CDD" id="cd03585">
    <property type="entry name" value="NTR_TIMP"/>
    <property type="match status" value="1"/>
</dbReference>
<dbReference type="FunFam" id="2.40.50.120:FF:000007">
    <property type="entry name" value="Metalloproteinase inhibitor 2"/>
    <property type="match status" value="1"/>
</dbReference>
<dbReference type="FunFam" id="3.90.370.10:FF:000001">
    <property type="entry name" value="Metalloproteinase inhibitor 3"/>
    <property type="match status" value="1"/>
</dbReference>
<dbReference type="Gene3D" id="2.40.50.120">
    <property type="match status" value="1"/>
</dbReference>
<dbReference type="Gene3D" id="3.90.370.10">
    <property type="entry name" value="Tissue inhibitor of metalloproteinase-1. Chain B, domain 1"/>
    <property type="match status" value="1"/>
</dbReference>
<dbReference type="InterPro" id="IPR001134">
    <property type="entry name" value="Netrin_domain"/>
</dbReference>
<dbReference type="InterPro" id="IPR001820">
    <property type="entry name" value="TIMP"/>
</dbReference>
<dbReference type="InterPro" id="IPR008993">
    <property type="entry name" value="TIMP-like_OB-fold"/>
</dbReference>
<dbReference type="InterPro" id="IPR027465">
    <property type="entry name" value="TIMP_C"/>
</dbReference>
<dbReference type="InterPro" id="IPR030490">
    <property type="entry name" value="TIMP_CS"/>
</dbReference>
<dbReference type="PANTHER" id="PTHR11844">
    <property type="entry name" value="METALLOPROTEASE INHIBITOR"/>
    <property type="match status" value="1"/>
</dbReference>
<dbReference type="PANTHER" id="PTHR11844:SF24">
    <property type="entry name" value="METALLOPROTEINASE INHIBITOR 2"/>
    <property type="match status" value="1"/>
</dbReference>
<dbReference type="Pfam" id="PF00965">
    <property type="entry name" value="TIMP"/>
    <property type="match status" value="1"/>
</dbReference>
<dbReference type="SMART" id="SM00206">
    <property type="entry name" value="NTR"/>
    <property type="match status" value="1"/>
</dbReference>
<dbReference type="SUPFAM" id="SSF50242">
    <property type="entry name" value="TIMP-like"/>
    <property type="match status" value="1"/>
</dbReference>
<dbReference type="PROSITE" id="PS50189">
    <property type="entry name" value="NTR"/>
    <property type="match status" value="1"/>
</dbReference>
<dbReference type="PROSITE" id="PS00288">
    <property type="entry name" value="TIMP"/>
    <property type="match status" value="1"/>
</dbReference>
<protein>
    <recommendedName>
        <fullName>Metalloproteinase inhibitor 2</fullName>
    </recommendedName>
    <alternativeName>
        <fullName>Tissue inhibitor of metalloproteinases 2</fullName>
        <shortName>TIMP-2</shortName>
    </alternativeName>
</protein>
<evidence type="ECO:0000250" key="1"/>
<evidence type="ECO:0000250" key="2">
    <source>
        <dbReference type="UniProtKB" id="P16035"/>
    </source>
</evidence>
<evidence type="ECO:0000255" key="3"/>
<evidence type="ECO:0000255" key="4">
    <source>
        <dbReference type="PROSITE-ProRule" id="PRU00295"/>
    </source>
</evidence>
<evidence type="ECO:0000305" key="5"/>